<organism>
    <name type="scientific">Shewanella sediminis (strain HAW-EB3)</name>
    <dbReference type="NCBI Taxonomy" id="425104"/>
    <lineage>
        <taxon>Bacteria</taxon>
        <taxon>Pseudomonadati</taxon>
        <taxon>Pseudomonadota</taxon>
        <taxon>Gammaproteobacteria</taxon>
        <taxon>Alteromonadales</taxon>
        <taxon>Shewanellaceae</taxon>
        <taxon>Shewanella</taxon>
    </lineage>
</organism>
<reference key="1">
    <citation type="submission" date="2007-08" db="EMBL/GenBank/DDBJ databases">
        <title>Complete sequence of Shewanella sediminis HAW-EB3.</title>
        <authorList>
            <consortium name="US DOE Joint Genome Institute"/>
            <person name="Copeland A."/>
            <person name="Lucas S."/>
            <person name="Lapidus A."/>
            <person name="Barry K."/>
            <person name="Glavina del Rio T."/>
            <person name="Dalin E."/>
            <person name="Tice H."/>
            <person name="Pitluck S."/>
            <person name="Chertkov O."/>
            <person name="Brettin T."/>
            <person name="Bruce D."/>
            <person name="Detter J.C."/>
            <person name="Han C."/>
            <person name="Schmutz J."/>
            <person name="Larimer F."/>
            <person name="Land M."/>
            <person name="Hauser L."/>
            <person name="Kyrpides N."/>
            <person name="Kim E."/>
            <person name="Zhao J.-S."/>
            <person name="Richardson P."/>
        </authorList>
    </citation>
    <scope>NUCLEOTIDE SEQUENCE [LARGE SCALE GENOMIC DNA]</scope>
    <source>
        <strain>HAW-EB3</strain>
    </source>
</reference>
<evidence type="ECO:0000255" key="1">
    <source>
        <dbReference type="HAMAP-Rule" id="MF_00259"/>
    </source>
</evidence>
<accession>A8FZK6</accession>
<gene>
    <name evidence="1" type="primary">gcvT</name>
    <name type="ordered locus">Ssed_3675</name>
</gene>
<name>GCST_SHESH</name>
<feature type="chain" id="PRO_1000078594" description="Aminomethyltransferase">
    <location>
        <begin position="1"/>
        <end position="364"/>
    </location>
</feature>
<keyword id="KW-0032">Aminotransferase</keyword>
<keyword id="KW-1185">Reference proteome</keyword>
<keyword id="KW-0808">Transferase</keyword>
<sequence length="364" mass="39504">MANKTVLFNKHLESDAKMVDFHGWDMPLNYGSQIEEHNAVRQDAGMFDVSHMTVVDVTGTDACAFLRKLLANDVAKLKVPGKALYGGMLDHNAGVIDDLITYYLTDTHYRVVVNSATREKDLAWIAEQVKGFDVEIVERPELAMIAVQGPNAKAKAATVFNDAQNAAVEGMKPFFGVQADSLFIATTGYTGETGYEIIVPEDEAQALWQGLLEAGVKPCGLGARDTLRLEAGMNLYGLDMDETVNPLAANMGWTIAWEPQDRDFNGREALAAIKAAGTEKLVGLIMEAKGVIRPGMSVFFTDGEGVEQQGTITSGTFSPTLGYSIAMARVPRSIGDTAEVEMRKKRVSVKVVAPSFVRNGKQAF</sequence>
<comment type="function">
    <text evidence="1">The glycine cleavage system catalyzes the degradation of glycine.</text>
</comment>
<comment type="catalytic activity">
    <reaction evidence="1">
        <text>N(6)-[(R)-S(8)-aminomethyldihydrolipoyl]-L-lysyl-[protein] + (6S)-5,6,7,8-tetrahydrofolate = N(6)-[(R)-dihydrolipoyl]-L-lysyl-[protein] + (6R)-5,10-methylene-5,6,7,8-tetrahydrofolate + NH4(+)</text>
        <dbReference type="Rhea" id="RHEA:16945"/>
        <dbReference type="Rhea" id="RHEA-COMP:10475"/>
        <dbReference type="Rhea" id="RHEA-COMP:10492"/>
        <dbReference type="ChEBI" id="CHEBI:15636"/>
        <dbReference type="ChEBI" id="CHEBI:28938"/>
        <dbReference type="ChEBI" id="CHEBI:57453"/>
        <dbReference type="ChEBI" id="CHEBI:83100"/>
        <dbReference type="ChEBI" id="CHEBI:83143"/>
        <dbReference type="EC" id="2.1.2.10"/>
    </reaction>
</comment>
<comment type="subunit">
    <text evidence="1">The glycine cleavage system is composed of four proteins: P, T, L and H.</text>
</comment>
<comment type="similarity">
    <text evidence="1">Belongs to the GcvT family.</text>
</comment>
<dbReference type="EC" id="2.1.2.10" evidence="1"/>
<dbReference type="EMBL" id="CP000821">
    <property type="protein sequence ID" value="ABV38279.1"/>
    <property type="molecule type" value="Genomic_DNA"/>
</dbReference>
<dbReference type="RefSeq" id="WP_012144009.1">
    <property type="nucleotide sequence ID" value="NC_009831.1"/>
</dbReference>
<dbReference type="SMR" id="A8FZK6"/>
<dbReference type="STRING" id="425104.Ssed_3675"/>
<dbReference type="KEGG" id="sse:Ssed_3675"/>
<dbReference type="eggNOG" id="COG0404">
    <property type="taxonomic scope" value="Bacteria"/>
</dbReference>
<dbReference type="HOGENOM" id="CLU_007884_10_2_6"/>
<dbReference type="OrthoDB" id="9774591at2"/>
<dbReference type="Proteomes" id="UP000002015">
    <property type="component" value="Chromosome"/>
</dbReference>
<dbReference type="GO" id="GO:0005829">
    <property type="term" value="C:cytosol"/>
    <property type="evidence" value="ECO:0007669"/>
    <property type="project" value="TreeGrafter"/>
</dbReference>
<dbReference type="GO" id="GO:0005960">
    <property type="term" value="C:glycine cleavage complex"/>
    <property type="evidence" value="ECO:0007669"/>
    <property type="project" value="InterPro"/>
</dbReference>
<dbReference type="GO" id="GO:0004047">
    <property type="term" value="F:aminomethyltransferase activity"/>
    <property type="evidence" value="ECO:0007669"/>
    <property type="project" value="UniProtKB-UniRule"/>
</dbReference>
<dbReference type="GO" id="GO:0008483">
    <property type="term" value="F:transaminase activity"/>
    <property type="evidence" value="ECO:0007669"/>
    <property type="project" value="UniProtKB-KW"/>
</dbReference>
<dbReference type="GO" id="GO:0019464">
    <property type="term" value="P:glycine decarboxylation via glycine cleavage system"/>
    <property type="evidence" value="ECO:0007669"/>
    <property type="project" value="UniProtKB-UniRule"/>
</dbReference>
<dbReference type="FunFam" id="2.40.30.110:FF:000001">
    <property type="entry name" value="Aminomethyltransferase"/>
    <property type="match status" value="1"/>
</dbReference>
<dbReference type="FunFam" id="3.30.70.1400:FF:000001">
    <property type="entry name" value="Aminomethyltransferase"/>
    <property type="match status" value="1"/>
</dbReference>
<dbReference type="FunFam" id="4.10.1250.10:FF:000001">
    <property type="entry name" value="Aminomethyltransferase"/>
    <property type="match status" value="1"/>
</dbReference>
<dbReference type="Gene3D" id="2.40.30.110">
    <property type="entry name" value="Aminomethyltransferase beta-barrel domains"/>
    <property type="match status" value="1"/>
</dbReference>
<dbReference type="Gene3D" id="3.30.70.1400">
    <property type="entry name" value="Aminomethyltransferase beta-barrel domains"/>
    <property type="match status" value="1"/>
</dbReference>
<dbReference type="Gene3D" id="4.10.1250.10">
    <property type="entry name" value="Aminomethyltransferase fragment"/>
    <property type="match status" value="1"/>
</dbReference>
<dbReference type="Gene3D" id="3.30.1360.120">
    <property type="entry name" value="Probable tRNA modification gtpase trme, domain 1"/>
    <property type="match status" value="1"/>
</dbReference>
<dbReference type="HAMAP" id="MF_00259">
    <property type="entry name" value="GcvT"/>
    <property type="match status" value="1"/>
</dbReference>
<dbReference type="InterPro" id="IPR006223">
    <property type="entry name" value="GCS_T"/>
</dbReference>
<dbReference type="InterPro" id="IPR022903">
    <property type="entry name" value="GCS_T_bac"/>
</dbReference>
<dbReference type="InterPro" id="IPR013977">
    <property type="entry name" value="GCST_C"/>
</dbReference>
<dbReference type="InterPro" id="IPR006222">
    <property type="entry name" value="GCV_T_N"/>
</dbReference>
<dbReference type="InterPro" id="IPR028896">
    <property type="entry name" value="GcvT/YgfZ/DmdA"/>
</dbReference>
<dbReference type="InterPro" id="IPR029043">
    <property type="entry name" value="GcvT/YgfZ_C"/>
</dbReference>
<dbReference type="InterPro" id="IPR027266">
    <property type="entry name" value="TrmE/GcvT_dom1"/>
</dbReference>
<dbReference type="NCBIfam" id="TIGR00528">
    <property type="entry name" value="gcvT"/>
    <property type="match status" value="1"/>
</dbReference>
<dbReference type="NCBIfam" id="NF001567">
    <property type="entry name" value="PRK00389.1"/>
    <property type="match status" value="1"/>
</dbReference>
<dbReference type="PANTHER" id="PTHR43757">
    <property type="entry name" value="AMINOMETHYLTRANSFERASE"/>
    <property type="match status" value="1"/>
</dbReference>
<dbReference type="PANTHER" id="PTHR43757:SF2">
    <property type="entry name" value="AMINOMETHYLTRANSFERASE, MITOCHONDRIAL"/>
    <property type="match status" value="1"/>
</dbReference>
<dbReference type="Pfam" id="PF01571">
    <property type="entry name" value="GCV_T"/>
    <property type="match status" value="1"/>
</dbReference>
<dbReference type="Pfam" id="PF08669">
    <property type="entry name" value="GCV_T_C"/>
    <property type="match status" value="1"/>
</dbReference>
<dbReference type="PIRSF" id="PIRSF006487">
    <property type="entry name" value="GcvT"/>
    <property type="match status" value="1"/>
</dbReference>
<dbReference type="SUPFAM" id="SSF101790">
    <property type="entry name" value="Aminomethyltransferase beta-barrel domain"/>
    <property type="match status" value="1"/>
</dbReference>
<dbReference type="SUPFAM" id="SSF103025">
    <property type="entry name" value="Folate-binding domain"/>
    <property type="match status" value="1"/>
</dbReference>
<proteinExistence type="inferred from homology"/>
<protein>
    <recommendedName>
        <fullName evidence="1">Aminomethyltransferase</fullName>
        <ecNumber evidence="1">2.1.2.10</ecNumber>
    </recommendedName>
    <alternativeName>
        <fullName evidence="1">Glycine cleavage system T protein</fullName>
    </alternativeName>
</protein>